<evidence type="ECO:0000250" key="1">
    <source>
        <dbReference type="UniProtKB" id="Q15046"/>
    </source>
</evidence>
<evidence type="ECO:0000255" key="2"/>
<evidence type="ECO:0000256" key="3">
    <source>
        <dbReference type="SAM" id="MobiDB-lite"/>
    </source>
</evidence>
<evidence type="ECO:0000269" key="4">
    <source>
    </source>
</evidence>
<evidence type="ECO:0000303" key="5">
    <source>
    </source>
</evidence>
<evidence type="ECO:0000305" key="6"/>
<evidence type="ECO:0000305" key="7">
    <source>
    </source>
</evidence>
<evidence type="ECO:0000305" key="8">
    <source>
    </source>
</evidence>
<evidence type="ECO:0007744" key="9">
    <source>
    </source>
</evidence>
<organism>
    <name type="scientific">Arabidopsis thaliana</name>
    <name type="common">Mouse-ear cress</name>
    <dbReference type="NCBI Taxonomy" id="3702"/>
    <lineage>
        <taxon>Eukaryota</taxon>
        <taxon>Viridiplantae</taxon>
        <taxon>Streptophyta</taxon>
        <taxon>Embryophyta</taxon>
        <taxon>Tracheophyta</taxon>
        <taxon>Spermatophyta</taxon>
        <taxon>Magnoliopsida</taxon>
        <taxon>eudicotyledons</taxon>
        <taxon>Gunneridae</taxon>
        <taxon>Pentapetalae</taxon>
        <taxon>rosids</taxon>
        <taxon>malvids</taxon>
        <taxon>Brassicales</taxon>
        <taxon>Brassicaceae</taxon>
        <taxon>Camelineae</taxon>
        <taxon>Arabidopsis</taxon>
    </lineage>
</organism>
<reference key="1">
    <citation type="submission" date="1999-02" db="EMBL/GenBank/DDBJ databases">
        <title>The Arabidopsis lysyl-tRNA synthetase: cDNA cloning and characterisation.</title>
        <authorList>
            <person name="Giritch A."/>
            <person name="Small I.D."/>
        </authorList>
    </citation>
    <scope>NUCLEOTIDE SEQUENCE [MRNA]</scope>
</reference>
<reference key="2">
    <citation type="journal article" date="2000" name="Nature">
        <title>Sequence and analysis of chromosome 3 of the plant Arabidopsis thaliana.</title>
        <authorList>
            <person name="Salanoubat M."/>
            <person name="Lemcke K."/>
            <person name="Rieger M."/>
            <person name="Ansorge W."/>
            <person name="Unseld M."/>
            <person name="Fartmann B."/>
            <person name="Valle G."/>
            <person name="Bloecker H."/>
            <person name="Perez-Alonso M."/>
            <person name="Obermaier B."/>
            <person name="Delseny M."/>
            <person name="Boutry M."/>
            <person name="Grivell L.A."/>
            <person name="Mache R."/>
            <person name="Puigdomenech P."/>
            <person name="De Simone V."/>
            <person name="Choisne N."/>
            <person name="Artiguenave F."/>
            <person name="Robert C."/>
            <person name="Brottier P."/>
            <person name="Wincker P."/>
            <person name="Cattolico L."/>
            <person name="Weissenbach J."/>
            <person name="Saurin W."/>
            <person name="Quetier F."/>
            <person name="Schaefer M."/>
            <person name="Mueller-Auer S."/>
            <person name="Gabel C."/>
            <person name="Fuchs M."/>
            <person name="Benes V."/>
            <person name="Wurmbach E."/>
            <person name="Drzonek H."/>
            <person name="Erfle H."/>
            <person name="Jordan N."/>
            <person name="Bangert S."/>
            <person name="Wiedelmann R."/>
            <person name="Kranz H."/>
            <person name="Voss H."/>
            <person name="Holland R."/>
            <person name="Brandt P."/>
            <person name="Nyakatura G."/>
            <person name="Vezzi A."/>
            <person name="D'Angelo M."/>
            <person name="Pallavicini A."/>
            <person name="Toppo S."/>
            <person name="Simionati B."/>
            <person name="Conrad A."/>
            <person name="Hornischer K."/>
            <person name="Kauer G."/>
            <person name="Loehnert T.-H."/>
            <person name="Nordsiek G."/>
            <person name="Reichelt J."/>
            <person name="Scharfe M."/>
            <person name="Schoen O."/>
            <person name="Bargues M."/>
            <person name="Terol J."/>
            <person name="Climent J."/>
            <person name="Navarro P."/>
            <person name="Collado C."/>
            <person name="Perez-Perez A."/>
            <person name="Ottenwaelder B."/>
            <person name="Duchemin D."/>
            <person name="Cooke R."/>
            <person name="Laudie M."/>
            <person name="Berger-Llauro C."/>
            <person name="Purnelle B."/>
            <person name="Masuy D."/>
            <person name="de Haan M."/>
            <person name="Maarse A.C."/>
            <person name="Alcaraz J.-P."/>
            <person name="Cottet A."/>
            <person name="Casacuberta E."/>
            <person name="Monfort A."/>
            <person name="Argiriou A."/>
            <person name="Flores M."/>
            <person name="Liguori R."/>
            <person name="Vitale D."/>
            <person name="Mannhaupt G."/>
            <person name="Haase D."/>
            <person name="Schoof H."/>
            <person name="Rudd S."/>
            <person name="Zaccaria P."/>
            <person name="Mewes H.-W."/>
            <person name="Mayer K.F.X."/>
            <person name="Kaul S."/>
            <person name="Town C.D."/>
            <person name="Koo H.L."/>
            <person name="Tallon L.J."/>
            <person name="Jenkins J."/>
            <person name="Rooney T."/>
            <person name="Rizzo M."/>
            <person name="Walts A."/>
            <person name="Utterback T."/>
            <person name="Fujii C.Y."/>
            <person name="Shea T.P."/>
            <person name="Creasy T.H."/>
            <person name="Haas B."/>
            <person name="Maiti R."/>
            <person name="Wu D."/>
            <person name="Peterson J."/>
            <person name="Van Aken S."/>
            <person name="Pai G."/>
            <person name="Militscher J."/>
            <person name="Sellers P."/>
            <person name="Gill J.E."/>
            <person name="Feldblyum T.V."/>
            <person name="Preuss D."/>
            <person name="Lin X."/>
            <person name="Nierman W.C."/>
            <person name="Salzberg S.L."/>
            <person name="White O."/>
            <person name="Venter J.C."/>
            <person name="Fraser C.M."/>
            <person name="Kaneko T."/>
            <person name="Nakamura Y."/>
            <person name="Sato S."/>
            <person name="Kato T."/>
            <person name="Asamizu E."/>
            <person name="Sasamoto S."/>
            <person name="Kimura T."/>
            <person name="Idesawa K."/>
            <person name="Kawashima K."/>
            <person name="Kishida Y."/>
            <person name="Kiyokawa C."/>
            <person name="Kohara M."/>
            <person name="Matsumoto M."/>
            <person name="Matsuno A."/>
            <person name="Muraki A."/>
            <person name="Nakayama S."/>
            <person name="Nakazaki N."/>
            <person name="Shinpo S."/>
            <person name="Takeuchi C."/>
            <person name="Wada T."/>
            <person name="Watanabe A."/>
            <person name="Yamada M."/>
            <person name="Yasuda M."/>
            <person name="Tabata S."/>
        </authorList>
    </citation>
    <scope>NUCLEOTIDE SEQUENCE [LARGE SCALE GENOMIC DNA]</scope>
    <source>
        <strain>cv. Columbia</strain>
    </source>
</reference>
<reference key="3">
    <citation type="journal article" date="2017" name="Plant J.">
        <title>Araport11: a complete reannotation of the Arabidopsis thaliana reference genome.</title>
        <authorList>
            <person name="Cheng C.Y."/>
            <person name="Krishnakumar V."/>
            <person name="Chan A.P."/>
            <person name="Thibaud-Nissen F."/>
            <person name="Schobel S."/>
            <person name="Town C.D."/>
        </authorList>
    </citation>
    <scope>GENOME REANNOTATION</scope>
    <source>
        <strain>cv. Columbia</strain>
    </source>
</reference>
<reference key="4">
    <citation type="journal article" date="2003" name="Science">
        <title>Empirical analysis of transcriptional activity in the Arabidopsis genome.</title>
        <authorList>
            <person name="Yamada K."/>
            <person name="Lim J."/>
            <person name="Dale J.M."/>
            <person name="Chen H."/>
            <person name="Shinn P."/>
            <person name="Palm C.J."/>
            <person name="Southwick A.M."/>
            <person name="Wu H.C."/>
            <person name="Kim C.J."/>
            <person name="Nguyen M."/>
            <person name="Pham P.K."/>
            <person name="Cheuk R.F."/>
            <person name="Karlin-Newmann G."/>
            <person name="Liu S.X."/>
            <person name="Lam B."/>
            <person name="Sakano H."/>
            <person name="Wu T."/>
            <person name="Yu G."/>
            <person name="Miranda M."/>
            <person name="Quach H.L."/>
            <person name="Tripp M."/>
            <person name="Chang C.H."/>
            <person name="Lee J.M."/>
            <person name="Toriumi M.J."/>
            <person name="Chan M.M."/>
            <person name="Tang C.C."/>
            <person name="Onodera C.S."/>
            <person name="Deng J.M."/>
            <person name="Akiyama K."/>
            <person name="Ansari Y."/>
            <person name="Arakawa T."/>
            <person name="Banh J."/>
            <person name="Banno F."/>
            <person name="Bowser L."/>
            <person name="Brooks S.Y."/>
            <person name="Carninci P."/>
            <person name="Chao Q."/>
            <person name="Choy N."/>
            <person name="Enju A."/>
            <person name="Goldsmith A.D."/>
            <person name="Gurjal M."/>
            <person name="Hansen N.F."/>
            <person name="Hayashizaki Y."/>
            <person name="Johnson-Hopson C."/>
            <person name="Hsuan V.W."/>
            <person name="Iida K."/>
            <person name="Karnes M."/>
            <person name="Khan S."/>
            <person name="Koesema E."/>
            <person name="Ishida J."/>
            <person name="Jiang P.X."/>
            <person name="Jones T."/>
            <person name="Kawai J."/>
            <person name="Kamiya A."/>
            <person name="Meyers C."/>
            <person name="Nakajima M."/>
            <person name="Narusaka M."/>
            <person name="Seki M."/>
            <person name="Sakurai T."/>
            <person name="Satou M."/>
            <person name="Tamse R."/>
            <person name="Vaysberg M."/>
            <person name="Wallender E.K."/>
            <person name="Wong C."/>
            <person name="Yamamura Y."/>
            <person name="Yuan S."/>
            <person name="Shinozaki K."/>
            <person name="Davis R.W."/>
            <person name="Theologis A."/>
            <person name="Ecker J.R."/>
        </authorList>
    </citation>
    <scope>NUCLEOTIDE SEQUENCE [LARGE SCALE MRNA]</scope>
    <source>
        <strain>cv. Columbia</strain>
    </source>
</reference>
<reference key="5">
    <citation type="journal article" date="2005" name="Plant J.">
        <title>Requirement of aminoacyl-tRNA synthetases for gametogenesis and embryo development in Arabidopsis.</title>
        <authorList>
            <person name="Berg M."/>
            <person name="Rogers R."/>
            <person name="Muralla R."/>
            <person name="Meinke D."/>
        </authorList>
    </citation>
    <scope>SUBCELLULAR LOCATION</scope>
</reference>
<reference key="6">
    <citation type="journal article" date="2005" name="Proc. Natl. Acad. Sci. U.S.A.">
        <title>Dual targeting is the rule for organellar aminoacyl-tRNA synthetases in Arabidopsis thaliana.</title>
        <authorList>
            <person name="Duchene A.-M."/>
            <person name="Giritch A."/>
            <person name="Hoffmann B."/>
            <person name="Cognat V."/>
            <person name="Lancelin D."/>
            <person name="Peeters N.M."/>
            <person name="Zaepfel M."/>
            <person name="Marechal-Drouard L."/>
            <person name="Small I.D."/>
        </authorList>
    </citation>
    <scope>SUBCELLULAR LOCATION</scope>
</reference>
<reference key="7">
    <citation type="journal article" date="2007" name="Mol. Cell. Proteomics">
        <title>Multidimensional protein identification technology (MudPIT) analysis of ubiquitinated proteins in plants.</title>
        <authorList>
            <person name="Maor R."/>
            <person name="Jones A."/>
            <person name="Nuehse T.S."/>
            <person name="Studholme D.J."/>
            <person name="Peck S.C."/>
            <person name="Shirasu K."/>
        </authorList>
    </citation>
    <scope>IDENTIFICATION BY MASS SPECTROMETRY [LARGE SCALE ANALYSIS]</scope>
    <source>
        <strain>cv. Landsberg erecta</strain>
    </source>
</reference>
<reference key="8">
    <citation type="journal article" date="2007" name="Plant J.">
        <title>Altered expression of plant lysyl tRNA synthetase promotes tRNA misacylation and translational recoding of lysine.</title>
        <authorList>
            <person name="Wu X.R."/>
            <person name="Kenzior A."/>
            <person name="Willmot D."/>
            <person name="Scanlon S."/>
            <person name="Chen Z."/>
            <person name="Topin A."/>
            <person name="He S.H."/>
            <person name="Acevedo A."/>
            <person name="Folk W.R."/>
        </authorList>
    </citation>
    <scope>FUNCTION</scope>
    <scope>CATALYTIC ACTIVITY</scope>
</reference>
<reference key="9">
    <citation type="journal article" date="2012" name="Mol. Cell. Proteomics">
        <title>Comparative large-scale characterisation of plant vs. mammal proteins reveals similar and idiosyncratic N-alpha acetylation features.</title>
        <authorList>
            <person name="Bienvenut W.V."/>
            <person name="Sumpton D."/>
            <person name="Martinez A."/>
            <person name="Lilla S."/>
            <person name="Espagne C."/>
            <person name="Meinnel T."/>
            <person name="Giglione C."/>
        </authorList>
    </citation>
    <scope>ACETYLATION [LARGE SCALE ANALYSIS] AT MET-1</scope>
    <scope>IDENTIFICATION BY MASS SPECTROMETRY [LARGE SCALE ANALYSIS]</scope>
</reference>
<accession>Q9ZPI1</accession>
<name>SYKC_ARATH</name>
<keyword id="KW-0007">Acetylation</keyword>
<keyword id="KW-0030">Aminoacyl-tRNA synthetase</keyword>
<keyword id="KW-0067">ATP-binding</keyword>
<keyword id="KW-0106">Calcium</keyword>
<keyword id="KW-0175">Coiled coil</keyword>
<keyword id="KW-0963">Cytoplasm</keyword>
<keyword id="KW-0238">DNA-binding</keyword>
<keyword id="KW-0436">Ligase</keyword>
<keyword id="KW-0479">Metal-binding</keyword>
<keyword id="KW-0547">Nucleotide-binding</keyword>
<keyword id="KW-0648">Protein biosynthesis</keyword>
<keyword id="KW-1185">Reference proteome</keyword>
<feature type="chain" id="PRO_0000152768" description="Lysine--tRNA ligase, cytoplasmic">
    <location>
        <begin position="1"/>
        <end position="626"/>
    </location>
</feature>
<feature type="DNA-binding region" description="OB" evidence="2">
    <location>
        <begin position="141"/>
        <end position="217"/>
    </location>
</feature>
<feature type="region of interest" description="Disordered" evidence="3">
    <location>
        <begin position="1"/>
        <end position="84"/>
    </location>
</feature>
<feature type="coiled-coil region" evidence="2">
    <location>
        <begin position="37"/>
        <end position="69"/>
    </location>
</feature>
<feature type="compositionally biased region" description="Polar residues" evidence="3">
    <location>
        <begin position="1"/>
        <end position="11"/>
    </location>
</feature>
<feature type="compositionally biased region" description="Polar residues" evidence="3">
    <location>
        <begin position="18"/>
        <end position="27"/>
    </location>
</feature>
<feature type="compositionally biased region" description="Basic and acidic residues" evidence="3">
    <location>
        <begin position="42"/>
        <end position="67"/>
    </location>
</feature>
<feature type="compositionally biased region" description="Low complexity" evidence="3">
    <location>
        <begin position="69"/>
        <end position="78"/>
    </location>
</feature>
<feature type="binding site" evidence="1">
    <location>
        <position position="313"/>
    </location>
    <ligand>
        <name>substrate</name>
    </ligand>
</feature>
<feature type="binding site" evidence="1">
    <location>
        <position position="337"/>
    </location>
    <ligand>
        <name>substrate</name>
    </ligand>
</feature>
<feature type="binding site" evidence="1">
    <location>
        <begin position="359"/>
        <end position="361"/>
    </location>
    <ligand>
        <name>ATP</name>
        <dbReference type="ChEBI" id="CHEBI:30616"/>
    </ligand>
</feature>
<feature type="binding site" evidence="1">
    <location>
        <begin position="367"/>
        <end position="368"/>
    </location>
    <ligand>
        <name>ATP</name>
        <dbReference type="ChEBI" id="CHEBI:30616"/>
    </ligand>
</feature>
<feature type="binding site" evidence="1">
    <location>
        <position position="375"/>
    </location>
    <ligand>
        <name>substrate</name>
    </ligand>
</feature>
<feature type="binding site" evidence="1">
    <location>
        <position position="377"/>
    </location>
    <ligand>
        <name>substrate</name>
    </ligand>
</feature>
<feature type="binding site" evidence="1">
    <location>
        <position position="521"/>
    </location>
    <ligand>
        <name>Ca(2+)</name>
        <dbReference type="ChEBI" id="CHEBI:29108"/>
    </ligand>
</feature>
<feature type="binding site" evidence="1">
    <location>
        <begin position="528"/>
        <end position="529"/>
    </location>
    <ligand>
        <name>ATP</name>
        <dbReference type="ChEBI" id="CHEBI:30616"/>
    </ligand>
</feature>
<feature type="binding site" evidence="1">
    <location>
        <position position="528"/>
    </location>
    <ligand>
        <name>Ca(2+)</name>
        <dbReference type="ChEBI" id="CHEBI:29108"/>
    </ligand>
</feature>
<feature type="binding site" evidence="1">
    <location>
        <position position="531"/>
    </location>
    <ligand>
        <name>substrate</name>
    </ligand>
</feature>
<feature type="binding site" evidence="1">
    <location>
        <position position="535"/>
    </location>
    <ligand>
        <name>substrate</name>
    </ligand>
</feature>
<feature type="binding site" evidence="1">
    <location>
        <begin position="584"/>
        <end position="587"/>
    </location>
    <ligand>
        <name>ATP</name>
        <dbReference type="ChEBI" id="CHEBI:30616"/>
    </ligand>
</feature>
<feature type="modified residue" description="N-acetylmethionine" evidence="9">
    <location>
        <position position="1"/>
    </location>
</feature>
<comment type="function">
    <text evidence="1 4">Catalyzes the specific attachment of an amino acid to its cognate tRNA in a 2 step reaction: the amino acid (AA) is first activated by ATP to form AA-AMP and then transferred to the acceptor end of the tRNA (By similarity). Promotes aminoacylation of non-cognate tRNAs and translational recoding of lysine at nonsense codons (PubMed:17425721).</text>
</comment>
<comment type="catalytic activity">
    <reaction evidence="4">
        <text>tRNA(Lys) + L-lysine + ATP = L-lysyl-tRNA(Lys) + AMP + diphosphate</text>
        <dbReference type="Rhea" id="RHEA:20792"/>
        <dbReference type="Rhea" id="RHEA-COMP:9696"/>
        <dbReference type="Rhea" id="RHEA-COMP:9697"/>
        <dbReference type="ChEBI" id="CHEBI:30616"/>
        <dbReference type="ChEBI" id="CHEBI:32551"/>
        <dbReference type="ChEBI" id="CHEBI:33019"/>
        <dbReference type="ChEBI" id="CHEBI:78442"/>
        <dbReference type="ChEBI" id="CHEBI:78529"/>
        <dbReference type="ChEBI" id="CHEBI:456215"/>
        <dbReference type="EC" id="6.1.1.6"/>
    </reaction>
</comment>
<comment type="cofactor">
    <cofactor evidence="1">
        <name>Ca(2+)</name>
        <dbReference type="ChEBI" id="CHEBI:29108"/>
    </cofactor>
</comment>
<comment type="subcellular location">
    <subcellularLocation>
        <location evidence="7 8">Cytoplasm</location>
        <location evidence="7 8">Cytosol</location>
    </subcellularLocation>
</comment>
<comment type="similarity">
    <text evidence="6">Belongs to the class-II aminoacyl-tRNA synthetase family.</text>
</comment>
<proteinExistence type="evidence at protein level"/>
<gene>
    <name type="ordered locus">At3g11710</name>
    <name type="ORF">T19F11.11</name>
</gene>
<protein>
    <recommendedName>
        <fullName evidence="6">Lysine--tRNA ligase, cytoplasmic</fullName>
        <ecNumber evidence="4">6.1.1.6</ecNumber>
    </recommendedName>
    <alternativeName>
        <fullName evidence="6">Lysyl-tRNA synthetase</fullName>
        <shortName evidence="6">LysRS</shortName>
    </alternativeName>
    <alternativeName>
        <fullName evidence="5">Lysyl-tRNA synthetase 1</fullName>
        <shortName evidence="5">AtKRS-1</shortName>
    </alternativeName>
</protein>
<sequence>MEGAADQTTKALSELAMDSSTTLNAAESSAGDGAGPRSKNALKKEQKMKQKEEEKRRKDEEKAEKAKQAPKASSQKAVAADDEEMDATQYYENRLKYLAAEKAKGENPYPHKFAVSMSIPKYIETYGSLNNGDHVENAEESLAGRIMSKRSSSSKLFFYDLHGDDFKVQVMADASKSGLDEAEFLKLHSNAKRGDIVGVIGFPGKTKRGELSIFPRSFILLSHCLHMMPRKADNVNAKKPEIWVPGQTRNPEAYVLKDQESRYRQRHLDMILNVEVRQIFRTRAKIISYVRRFLDNKNFLEVETPMMNMIAGGAAARPFVTHHNDLDMRLYMRIAPELYLKQLIVGGLERVYEIGKQFRNEGIDLTHNPEFTTCEFYMAFADYNDLMEMTEVMLSGMVKELTGGYKIKYNANGYDKDPIEIDFTPPFRRIEMIGELEKVAKLNIPKDLASEEANKYLIDACARFDVKCPPPQTTARLLDKLVGEFLEPTCVNPTFIINQPEIMSPLAKWHRSKSGLTERFELFINKHELCNAYTELNDPVVQRQRFADQLKDRQSGDDEAMALDETFCNALEYGLAPTGGWGLGIDRLSMLLTDSLNIKEVLFFPAMRPPQEESAAAQAPLTEEKK</sequence>
<dbReference type="EC" id="6.1.1.6" evidence="4"/>
<dbReference type="EMBL" id="AF125574">
    <property type="protein sequence ID" value="AAD17333.1"/>
    <property type="molecule type" value="mRNA"/>
</dbReference>
<dbReference type="EMBL" id="AC009918">
    <property type="protein sequence ID" value="AAF02138.1"/>
    <property type="molecule type" value="Genomic_DNA"/>
</dbReference>
<dbReference type="EMBL" id="CP002686">
    <property type="protein sequence ID" value="AEE75086.1"/>
    <property type="molecule type" value="Genomic_DNA"/>
</dbReference>
<dbReference type="EMBL" id="AY099551">
    <property type="protein sequence ID" value="AAM20403.1"/>
    <property type="molecule type" value="mRNA"/>
</dbReference>
<dbReference type="EMBL" id="BT002123">
    <property type="protein sequence ID" value="AAN72134.1"/>
    <property type="molecule type" value="mRNA"/>
</dbReference>
<dbReference type="SMR" id="Q9ZPI1"/>
<dbReference type="BioGRID" id="5677">
    <property type="interactions" value="19"/>
</dbReference>
<dbReference type="FunCoup" id="Q9ZPI1">
    <property type="interactions" value="4787"/>
</dbReference>
<dbReference type="IntAct" id="Q9ZPI1">
    <property type="interactions" value="1"/>
</dbReference>
<dbReference type="STRING" id="3702.Q9ZPI1"/>
<dbReference type="iPTMnet" id="Q9ZPI1"/>
<dbReference type="MetOSite" id="Q9ZPI1"/>
<dbReference type="PaxDb" id="3702-AT3G11710.1"/>
<dbReference type="ProteomicsDB" id="233042"/>
<dbReference type="EnsemblPlants" id="AT3G11710.1">
    <property type="protein sequence ID" value="AT3G11710.1"/>
    <property type="gene ID" value="AT3G11710"/>
</dbReference>
<dbReference type="Gramene" id="AT3G11710.1">
    <property type="protein sequence ID" value="AT3G11710.1"/>
    <property type="gene ID" value="AT3G11710"/>
</dbReference>
<dbReference type="KEGG" id="ath:AT3G11710"/>
<dbReference type="Araport" id="AT3G11710"/>
<dbReference type="TAIR" id="AT3G11710">
    <property type="gene designation" value="ATKRS-1"/>
</dbReference>
<dbReference type="eggNOG" id="KOG1885">
    <property type="taxonomic scope" value="Eukaryota"/>
</dbReference>
<dbReference type="HOGENOM" id="CLU_008255_6_0_1"/>
<dbReference type="InParanoid" id="Q9ZPI1"/>
<dbReference type="OMA" id="DFRNEGM"/>
<dbReference type="OrthoDB" id="21243at2759"/>
<dbReference type="PhylomeDB" id="Q9ZPI1"/>
<dbReference type="CD-CODE" id="4299E36E">
    <property type="entry name" value="Nucleolus"/>
</dbReference>
<dbReference type="PRO" id="PR:Q9ZPI1"/>
<dbReference type="Proteomes" id="UP000006548">
    <property type="component" value="Chromosome 3"/>
</dbReference>
<dbReference type="ExpressionAtlas" id="Q9ZPI1">
    <property type="expression patterns" value="baseline and differential"/>
</dbReference>
<dbReference type="GO" id="GO:0005829">
    <property type="term" value="C:cytosol"/>
    <property type="evidence" value="ECO:0007005"/>
    <property type="project" value="TAIR"/>
</dbReference>
<dbReference type="GO" id="GO:0009506">
    <property type="term" value="C:plasmodesma"/>
    <property type="evidence" value="ECO:0007005"/>
    <property type="project" value="TAIR"/>
</dbReference>
<dbReference type="GO" id="GO:0005524">
    <property type="term" value="F:ATP binding"/>
    <property type="evidence" value="ECO:0007669"/>
    <property type="project" value="UniProtKB-KW"/>
</dbReference>
<dbReference type="GO" id="GO:0003677">
    <property type="term" value="F:DNA binding"/>
    <property type="evidence" value="ECO:0007669"/>
    <property type="project" value="UniProtKB-KW"/>
</dbReference>
<dbReference type="GO" id="GO:0004824">
    <property type="term" value="F:lysine-tRNA ligase activity"/>
    <property type="evidence" value="ECO:0000314"/>
    <property type="project" value="TAIR"/>
</dbReference>
<dbReference type="GO" id="GO:0046872">
    <property type="term" value="F:metal ion binding"/>
    <property type="evidence" value="ECO:0007669"/>
    <property type="project" value="UniProtKB-KW"/>
</dbReference>
<dbReference type="GO" id="GO:0006430">
    <property type="term" value="P:lysyl-tRNA aminoacylation"/>
    <property type="evidence" value="ECO:0007669"/>
    <property type="project" value="InterPro"/>
</dbReference>
<dbReference type="CDD" id="cd00775">
    <property type="entry name" value="LysRS_core"/>
    <property type="match status" value="1"/>
</dbReference>
<dbReference type="CDD" id="cd04322">
    <property type="entry name" value="LysRS_N"/>
    <property type="match status" value="1"/>
</dbReference>
<dbReference type="FunFam" id="2.40.50.140:FF:000050">
    <property type="entry name" value="Lysine--tRNA ligase"/>
    <property type="match status" value="1"/>
</dbReference>
<dbReference type="FunFam" id="3.30.930.10:FF:000051">
    <property type="entry name" value="Lysine--tRNA ligase"/>
    <property type="match status" value="1"/>
</dbReference>
<dbReference type="Gene3D" id="3.30.930.10">
    <property type="entry name" value="Bira Bifunctional Protein, Domain 2"/>
    <property type="match status" value="1"/>
</dbReference>
<dbReference type="Gene3D" id="2.40.50.140">
    <property type="entry name" value="Nucleic acid-binding proteins"/>
    <property type="match status" value="1"/>
</dbReference>
<dbReference type="HAMAP" id="MF_00252">
    <property type="entry name" value="Lys_tRNA_synth_class2"/>
    <property type="match status" value="1"/>
</dbReference>
<dbReference type="InterPro" id="IPR004364">
    <property type="entry name" value="Aa-tRNA-synt_II"/>
</dbReference>
<dbReference type="InterPro" id="IPR006195">
    <property type="entry name" value="aa-tRNA-synth_II"/>
</dbReference>
<dbReference type="InterPro" id="IPR045864">
    <property type="entry name" value="aa-tRNA-synth_II/BPL/LPL"/>
</dbReference>
<dbReference type="InterPro" id="IPR002313">
    <property type="entry name" value="Lys-tRNA-ligase_II"/>
</dbReference>
<dbReference type="InterPro" id="IPR034762">
    <property type="entry name" value="Lys-tRNA-ligase_II_bac/euk"/>
</dbReference>
<dbReference type="InterPro" id="IPR044136">
    <property type="entry name" value="Lys-tRNA-ligase_II_N"/>
</dbReference>
<dbReference type="InterPro" id="IPR018149">
    <property type="entry name" value="Lys-tRNA-synth_II_C"/>
</dbReference>
<dbReference type="InterPro" id="IPR012340">
    <property type="entry name" value="NA-bd_OB-fold"/>
</dbReference>
<dbReference type="InterPro" id="IPR004365">
    <property type="entry name" value="NA-bd_OB_tRNA"/>
</dbReference>
<dbReference type="NCBIfam" id="TIGR00499">
    <property type="entry name" value="lysS_bact"/>
    <property type="match status" value="1"/>
</dbReference>
<dbReference type="NCBIfam" id="NF001756">
    <property type="entry name" value="PRK00484.1"/>
    <property type="match status" value="1"/>
</dbReference>
<dbReference type="PANTHER" id="PTHR42918:SF9">
    <property type="entry name" value="LYSINE--TRNA LIGASE"/>
    <property type="match status" value="1"/>
</dbReference>
<dbReference type="PANTHER" id="PTHR42918">
    <property type="entry name" value="LYSYL-TRNA SYNTHETASE"/>
    <property type="match status" value="1"/>
</dbReference>
<dbReference type="Pfam" id="PF00152">
    <property type="entry name" value="tRNA-synt_2"/>
    <property type="match status" value="1"/>
</dbReference>
<dbReference type="Pfam" id="PF01336">
    <property type="entry name" value="tRNA_anti-codon"/>
    <property type="match status" value="1"/>
</dbReference>
<dbReference type="PIRSF" id="PIRSF039101">
    <property type="entry name" value="LysRS2"/>
    <property type="match status" value="1"/>
</dbReference>
<dbReference type="PRINTS" id="PR00982">
    <property type="entry name" value="TRNASYNTHLYS"/>
</dbReference>
<dbReference type="SUPFAM" id="SSF55681">
    <property type="entry name" value="Class II aaRS and biotin synthetases"/>
    <property type="match status" value="1"/>
</dbReference>
<dbReference type="SUPFAM" id="SSF50249">
    <property type="entry name" value="Nucleic acid-binding proteins"/>
    <property type="match status" value="1"/>
</dbReference>
<dbReference type="PROSITE" id="PS50862">
    <property type="entry name" value="AA_TRNA_LIGASE_II"/>
    <property type="match status" value="1"/>
</dbReference>